<accession>P03740</accession>
<sequence>MAFRMSEQPRTIKIYNLLAGTNEFIGEGDAYIPPHTGLPANSTDIAPPDIPAGFVAVFNSDEASWHLVEDHRGKTVYDVASGDALFISELGPLPENFTWLSPGGEYQKWNGTAWVKDTEAEKLFRIREAEETKKSLMQVASEHIAPLQDAADLEIATKEETSLLEAWKKYRVLLNRVDTSTAPDIEWPAVPVME</sequence>
<organism>
    <name type="scientific">Escherichia phage lambda</name>
    <name type="common">Bacteriophage lambda</name>
    <dbReference type="NCBI Taxonomy" id="2681611"/>
    <lineage>
        <taxon>Viruses</taxon>
        <taxon>Duplodnaviria</taxon>
        <taxon>Heunggongvirae</taxon>
        <taxon>Uroviricota</taxon>
        <taxon>Caudoviricetes</taxon>
        <taxon>Lambdavirus</taxon>
        <taxon>Lambdavirus lambda</taxon>
    </lineage>
</organism>
<comment type="function">
    <text evidence="1">Chaperone that acts in assembly of the long tail fibers.</text>
</comment>
<comment type="subunit">
    <text>Homodimer.</text>
</comment>
<comment type="similarity">
    <text evidence="2">Belongs to the tfa family.</text>
</comment>
<reference key="1">
    <citation type="journal article" date="1982" name="J. Mol. Biol.">
        <title>Nucleotide sequence of bacteriophage lambda DNA.</title>
        <authorList>
            <person name="Sanger F."/>
            <person name="Coulson A.R."/>
            <person name="Hong G.F."/>
            <person name="Hill D.F."/>
            <person name="Petersen G.B."/>
        </authorList>
    </citation>
    <scope>NUCLEOTIDE SEQUENCE [LARGE SCALE GENOMIC DNA]</scope>
</reference>
<reference key="2">
    <citation type="journal article" date="1987" name="J. Bacteriol.">
        <title>An open reading frame in the Escherichia coli bacteriophage lambda genome encodes a protein that functions in assembly of the long tail fibers of bacteriophage T4.</title>
        <authorList>
            <person name="Montag D."/>
            <person name="Henning U."/>
        </authorList>
    </citation>
    <scope>FUNCTION</scope>
</reference>
<reference key="3">
    <citation type="journal article" date="1996" name="J. Bacteriol.">
        <title>Characterization of the helper proteins for the assembly of tail fibers of coliphages T4 and lambda.</title>
        <authorList>
            <person name="Hashemolhosseini S."/>
            <person name="Stierhof Y.D."/>
            <person name="Hindennach I."/>
            <person name="Henning U."/>
        </authorList>
    </citation>
    <scope>CHARACTERIZATION</scope>
    <scope>CRYSTALLIZATION</scope>
</reference>
<proteinExistence type="evidence at protein level"/>
<organismHost>
    <name type="scientific">Escherichia coli</name>
    <dbReference type="NCBI Taxonomy" id="562"/>
</organismHost>
<name>TFA_LAMBD</name>
<feature type="chain" id="PRO_0000070302" description="Tail fiber assembly protein">
    <location>
        <begin position="1"/>
        <end position="194"/>
    </location>
</feature>
<gene>
    <name type="primary">tfa</name>
    <name type="ordered locus">lambdap29</name>
    <name type="ORF">ORF-314</name>
</gene>
<protein>
    <recommendedName>
        <fullName>Tail fiber assembly protein</fullName>
    </recommendedName>
</protein>
<evidence type="ECO:0000269" key="1">
    <source>
    </source>
</evidence>
<evidence type="ECO:0000305" key="2"/>
<dbReference type="EMBL" id="J02459">
    <property type="protein sequence ID" value="AAA96558.1"/>
    <property type="molecule type" value="Genomic_DNA"/>
</dbReference>
<dbReference type="PIR" id="B43009">
    <property type="entry name" value="QXBP3L"/>
</dbReference>
<dbReference type="SMR" id="P03740"/>
<dbReference type="IntAct" id="P03740">
    <property type="interactions" value="3"/>
</dbReference>
<dbReference type="KEGG" id="vg:2703503"/>
<dbReference type="Proteomes" id="UP000001711">
    <property type="component" value="Genome"/>
</dbReference>
<dbReference type="GO" id="GO:0098004">
    <property type="term" value="P:virus tail fiber assembly"/>
    <property type="evidence" value="ECO:0007669"/>
    <property type="project" value="UniProtKB-KW"/>
</dbReference>
<dbReference type="InterPro" id="IPR003458">
    <property type="entry name" value="Phage_T4_Gp38_tail_assem"/>
</dbReference>
<dbReference type="InterPro" id="IPR051220">
    <property type="entry name" value="TFA_Chaperone"/>
</dbReference>
<dbReference type="PANTHER" id="PTHR34413:SF2">
    <property type="entry name" value="PROPHAGE TAIL FIBER ASSEMBLY PROTEIN HOMOLOG TFAE-RELATED"/>
    <property type="match status" value="1"/>
</dbReference>
<dbReference type="PANTHER" id="PTHR34413">
    <property type="entry name" value="PROPHAGE TAIL FIBER ASSEMBLY PROTEIN HOMOLOG TFAE-RELATED-RELATED"/>
    <property type="match status" value="1"/>
</dbReference>
<dbReference type="Pfam" id="PF02413">
    <property type="entry name" value="Caudo_TAP"/>
    <property type="match status" value="1"/>
</dbReference>
<keyword id="KW-0143">Chaperone</keyword>
<keyword id="KW-1185">Reference proteome</keyword>
<keyword id="KW-1188">Viral release from host cell</keyword>
<keyword id="KW-1245">Viral tail assembly</keyword>
<keyword id="KW-1246">Viral tail fiber assembly</keyword>